<gene>
    <name evidence="1" type="primary">mnmA</name>
    <name type="synonym">trmU</name>
    <name type="ordered locus">RC0410</name>
</gene>
<proteinExistence type="inferred from homology"/>
<accession>Q92IL0</accession>
<organism>
    <name type="scientific">Rickettsia conorii (strain ATCC VR-613 / Malish 7)</name>
    <dbReference type="NCBI Taxonomy" id="272944"/>
    <lineage>
        <taxon>Bacteria</taxon>
        <taxon>Pseudomonadati</taxon>
        <taxon>Pseudomonadota</taxon>
        <taxon>Alphaproteobacteria</taxon>
        <taxon>Rickettsiales</taxon>
        <taxon>Rickettsiaceae</taxon>
        <taxon>Rickettsieae</taxon>
        <taxon>Rickettsia</taxon>
        <taxon>spotted fever group</taxon>
    </lineage>
</organism>
<dbReference type="EC" id="2.8.1.13" evidence="1"/>
<dbReference type="EMBL" id="AE006914">
    <property type="protein sequence ID" value="AAL02948.1"/>
    <property type="molecule type" value="Genomic_DNA"/>
</dbReference>
<dbReference type="PIR" id="B97751">
    <property type="entry name" value="B97751"/>
</dbReference>
<dbReference type="SMR" id="Q92IL0"/>
<dbReference type="KEGG" id="rco:RC0410"/>
<dbReference type="HOGENOM" id="CLU_035188_0_1_5"/>
<dbReference type="Proteomes" id="UP000000816">
    <property type="component" value="Chromosome"/>
</dbReference>
<dbReference type="GO" id="GO:0005737">
    <property type="term" value="C:cytoplasm"/>
    <property type="evidence" value="ECO:0007669"/>
    <property type="project" value="UniProtKB-SubCell"/>
</dbReference>
<dbReference type="GO" id="GO:0005524">
    <property type="term" value="F:ATP binding"/>
    <property type="evidence" value="ECO:0007669"/>
    <property type="project" value="UniProtKB-KW"/>
</dbReference>
<dbReference type="GO" id="GO:0000049">
    <property type="term" value="F:tRNA binding"/>
    <property type="evidence" value="ECO:0007669"/>
    <property type="project" value="UniProtKB-KW"/>
</dbReference>
<dbReference type="GO" id="GO:0103016">
    <property type="term" value="F:tRNA-uridine 2-sulfurtransferase activity"/>
    <property type="evidence" value="ECO:0007669"/>
    <property type="project" value="UniProtKB-EC"/>
</dbReference>
<dbReference type="GO" id="GO:0002143">
    <property type="term" value="P:tRNA wobble position uridine thiolation"/>
    <property type="evidence" value="ECO:0007669"/>
    <property type="project" value="TreeGrafter"/>
</dbReference>
<dbReference type="CDD" id="cd01998">
    <property type="entry name" value="MnmA_TRMU-like"/>
    <property type="match status" value="1"/>
</dbReference>
<dbReference type="FunFam" id="2.30.30.280:FF:000001">
    <property type="entry name" value="tRNA-specific 2-thiouridylase MnmA"/>
    <property type="match status" value="1"/>
</dbReference>
<dbReference type="FunFam" id="2.40.30.10:FF:000127">
    <property type="entry name" value="tRNA-specific 2-thiouridylase MnmA"/>
    <property type="match status" value="1"/>
</dbReference>
<dbReference type="FunFam" id="3.40.50.620:FF:000115">
    <property type="entry name" value="tRNA-specific 2-thiouridylase MnmA"/>
    <property type="match status" value="1"/>
</dbReference>
<dbReference type="Gene3D" id="2.30.30.280">
    <property type="entry name" value="Adenine nucleotide alpha hydrolases-like domains"/>
    <property type="match status" value="1"/>
</dbReference>
<dbReference type="Gene3D" id="3.40.50.620">
    <property type="entry name" value="HUPs"/>
    <property type="match status" value="1"/>
</dbReference>
<dbReference type="Gene3D" id="2.40.30.10">
    <property type="entry name" value="Translation factors"/>
    <property type="match status" value="1"/>
</dbReference>
<dbReference type="HAMAP" id="MF_00144">
    <property type="entry name" value="tRNA_thiouridyl_MnmA"/>
    <property type="match status" value="1"/>
</dbReference>
<dbReference type="InterPro" id="IPR004506">
    <property type="entry name" value="MnmA-like"/>
</dbReference>
<dbReference type="InterPro" id="IPR046885">
    <property type="entry name" value="MnmA-like_C"/>
</dbReference>
<dbReference type="InterPro" id="IPR046884">
    <property type="entry name" value="MnmA-like_central"/>
</dbReference>
<dbReference type="InterPro" id="IPR023382">
    <property type="entry name" value="MnmA-like_central_sf"/>
</dbReference>
<dbReference type="InterPro" id="IPR014729">
    <property type="entry name" value="Rossmann-like_a/b/a_fold"/>
</dbReference>
<dbReference type="NCBIfam" id="NF001138">
    <property type="entry name" value="PRK00143.1"/>
    <property type="match status" value="1"/>
</dbReference>
<dbReference type="NCBIfam" id="TIGR00420">
    <property type="entry name" value="trmU"/>
    <property type="match status" value="1"/>
</dbReference>
<dbReference type="PANTHER" id="PTHR11933:SF5">
    <property type="entry name" value="MITOCHONDRIAL TRNA-SPECIFIC 2-THIOURIDYLASE 1"/>
    <property type="match status" value="1"/>
</dbReference>
<dbReference type="PANTHER" id="PTHR11933">
    <property type="entry name" value="TRNA 5-METHYLAMINOMETHYL-2-THIOURIDYLATE -METHYLTRANSFERASE"/>
    <property type="match status" value="1"/>
</dbReference>
<dbReference type="Pfam" id="PF03054">
    <property type="entry name" value="tRNA_Me_trans"/>
    <property type="match status" value="1"/>
</dbReference>
<dbReference type="Pfam" id="PF20258">
    <property type="entry name" value="tRNA_Me_trans_C"/>
    <property type="match status" value="1"/>
</dbReference>
<dbReference type="Pfam" id="PF20259">
    <property type="entry name" value="tRNA_Me_trans_M"/>
    <property type="match status" value="1"/>
</dbReference>
<dbReference type="SUPFAM" id="SSF52402">
    <property type="entry name" value="Adenine nucleotide alpha hydrolases-like"/>
    <property type="match status" value="1"/>
</dbReference>
<keyword id="KW-0067">ATP-binding</keyword>
<keyword id="KW-0963">Cytoplasm</keyword>
<keyword id="KW-1015">Disulfide bond</keyword>
<keyword id="KW-0547">Nucleotide-binding</keyword>
<keyword id="KW-0694">RNA-binding</keyword>
<keyword id="KW-0808">Transferase</keyword>
<keyword id="KW-0819">tRNA processing</keyword>
<keyword id="KW-0820">tRNA-binding</keyword>
<protein>
    <recommendedName>
        <fullName evidence="1">tRNA-specific 2-thiouridylase MnmA</fullName>
        <ecNumber evidence="1">2.8.1.13</ecNumber>
    </recommendedName>
</protein>
<sequence length="370" mass="40915">MFKVGMINLGDKQSTIVVAMSGGVDSSAVAAMLHEQGHNVIGITLQLYDHGMAVGKKNACCAGQDIYDAKMVANKLGIPHYVLDYENKFKESVIDNFVDSYLQGETPLPCVQCNKSVKFRDLIKTARELGADKLATGHYVRKINGDNGAELHTGLDPAKDQSYFLFTTTKEQLEYLRFPLGGLTKDETRKLASKFGLEVADKPDSQDICFIPDGNYKSVINKIRPNSSESGKIIHVNGFELGEHSGIINYTIGQRRGLGIAYNEPLYVVKIDPKDNIVYVGPESALNVQEFIIRDVNWLADEIKDNEKLEVAVKIRSTRPPRLAEISKLGDDKMKVKFLCEEKAVAPGQACVIYAGERVLGGGWITREIR</sequence>
<evidence type="ECO:0000255" key="1">
    <source>
        <dbReference type="HAMAP-Rule" id="MF_00144"/>
    </source>
</evidence>
<reference key="1">
    <citation type="journal article" date="2001" name="Science">
        <title>Mechanisms of evolution in Rickettsia conorii and R. prowazekii.</title>
        <authorList>
            <person name="Ogata H."/>
            <person name="Audic S."/>
            <person name="Renesto-Audiffren P."/>
            <person name="Fournier P.-E."/>
            <person name="Barbe V."/>
            <person name="Samson D."/>
            <person name="Roux V."/>
            <person name="Cossart P."/>
            <person name="Weissenbach J."/>
            <person name="Claverie J.-M."/>
            <person name="Raoult D."/>
        </authorList>
    </citation>
    <scope>NUCLEOTIDE SEQUENCE [LARGE SCALE GENOMIC DNA]</scope>
    <source>
        <strain>ATCC VR-613 / Malish 7</strain>
    </source>
</reference>
<name>MNMA_RICCN</name>
<comment type="function">
    <text evidence="1">Catalyzes the 2-thiolation of uridine at the wobble position (U34) of tRNA, leading to the formation of s(2)U34.</text>
</comment>
<comment type="catalytic activity">
    <reaction evidence="1">
        <text>S-sulfanyl-L-cysteinyl-[protein] + uridine(34) in tRNA + AH2 + ATP = 2-thiouridine(34) in tRNA + L-cysteinyl-[protein] + A + AMP + diphosphate + H(+)</text>
        <dbReference type="Rhea" id="RHEA:47032"/>
        <dbReference type="Rhea" id="RHEA-COMP:10131"/>
        <dbReference type="Rhea" id="RHEA-COMP:11726"/>
        <dbReference type="Rhea" id="RHEA-COMP:11727"/>
        <dbReference type="Rhea" id="RHEA-COMP:11728"/>
        <dbReference type="ChEBI" id="CHEBI:13193"/>
        <dbReference type="ChEBI" id="CHEBI:15378"/>
        <dbReference type="ChEBI" id="CHEBI:17499"/>
        <dbReference type="ChEBI" id="CHEBI:29950"/>
        <dbReference type="ChEBI" id="CHEBI:30616"/>
        <dbReference type="ChEBI" id="CHEBI:33019"/>
        <dbReference type="ChEBI" id="CHEBI:61963"/>
        <dbReference type="ChEBI" id="CHEBI:65315"/>
        <dbReference type="ChEBI" id="CHEBI:87170"/>
        <dbReference type="ChEBI" id="CHEBI:456215"/>
        <dbReference type="EC" id="2.8.1.13"/>
    </reaction>
</comment>
<comment type="subcellular location">
    <subcellularLocation>
        <location evidence="1">Cytoplasm</location>
    </subcellularLocation>
</comment>
<comment type="similarity">
    <text evidence="1">Belongs to the MnmA/TRMU family.</text>
</comment>
<feature type="chain" id="PRO_0000121669" description="tRNA-specific 2-thiouridylase MnmA">
    <location>
        <begin position="1"/>
        <end position="370"/>
    </location>
</feature>
<feature type="region of interest" description="Interaction with tRNA" evidence="1">
    <location>
        <begin position="159"/>
        <end position="161"/>
    </location>
</feature>
<feature type="active site" description="Nucleophile" evidence="1">
    <location>
        <position position="113"/>
    </location>
</feature>
<feature type="active site" description="Cysteine persulfide intermediate" evidence="1">
    <location>
        <position position="209"/>
    </location>
</feature>
<feature type="binding site" evidence="1">
    <location>
        <begin position="19"/>
        <end position="26"/>
    </location>
    <ligand>
        <name>ATP</name>
        <dbReference type="ChEBI" id="CHEBI:30616"/>
    </ligand>
</feature>
<feature type="binding site" evidence="1">
    <location>
        <position position="45"/>
    </location>
    <ligand>
        <name>ATP</name>
        <dbReference type="ChEBI" id="CHEBI:30616"/>
    </ligand>
</feature>
<feature type="binding site" evidence="1">
    <location>
        <position position="137"/>
    </location>
    <ligand>
        <name>ATP</name>
        <dbReference type="ChEBI" id="CHEBI:30616"/>
    </ligand>
</feature>
<feature type="site" description="Interaction with tRNA" evidence="1">
    <location>
        <position position="138"/>
    </location>
</feature>
<feature type="site" description="Interaction with tRNA" evidence="1">
    <location>
        <position position="349"/>
    </location>
</feature>
<feature type="disulfide bond" description="Alternate" evidence="1">
    <location>
        <begin position="113"/>
        <end position="209"/>
    </location>
</feature>